<name>ZC3HF_DROME</name>
<organism>
    <name type="scientific">Drosophila melanogaster</name>
    <name type="common">Fruit fly</name>
    <dbReference type="NCBI Taxonomy" id="7227"/>
    <lineage>
        <taxon>Eukaryota</taxon>
        <taxon>Metazoa</taxon>
        <taxon>Ecdysozoa</taxon>
        <taxon>Arthropoda</taxon>
        <taxon>Hexapoda</taxon>
        <taxon>Insecta</taxon>
        <taxon>Pterygota</taxon>
        <taxon>Neoptera</taxon>
        <taxon>Endopterygota</taxon>
        <taxon>Diptera</taxon>
        <taxon>Brachycera</taxon>
        <taxon>Muscomorpha</taxon>
        <taxon>Ephydroidea</taxon>
        <taxon>Drosophilidae</taxon>
        <taxon>Drosophila</taxon>
        <taxon>Sophophora</taxon>
    </lineage>
</organism>
<sequence>MPPKKAPPGPSKKTEQKKKEKVIEDKTFGLKNKKGNKQQKFIQQVQKQVQSGGQHPRQDGDKRKEEKEKKLAEQREMALIFKPVQTQKVEKGTDPKSVVCAFFKQGTCTKGDKCKFSHDLSQENKVEKRSIYVDMRDEDDPMTNWDDAKLKEVVEKKSSGEKQRPTTDIICKFFLEAVEKSKYGWFWECPNGGKCIYRHALPAGYVLKRDKKKEEKPTEISLVDLIEKERAALGPNQTRVTLESFLAWKKRKIAEKKAKLAAEEERKKSDFSKGKQFGISGREMFSFNPDLVDDGPMEEGDAAFDVYNREDDDDNAVEFKELDLAALSLAAKEVDGSGTIASTNRLLDQATEAAKTAAAEDAAADEDGPSSSAPANDAAPINKDLFVDLAGELDDLDLDDEDDD</sequence>
<comment type="similarity">
    <text evidence="5">Belongs to the ZC3H15/TMA46 family.</text>
</comment>
<protein>
    <recommendedName>
        <fullName>Zinc finger CCCH domain-containing protein 15 homolog</fullName>
        <shortName>DRG family regulatory protein 1 homolog</shortName>
    </recommendedName>
</protein>
<reference key="1">
    <citation type="journal article" date="2000" name="Science">
        <title>The genome sequence of Drosophila melanogaster.</title>
        <authorList>
            <person name="Adams M.D."/>
            <person name="Celniker S.E."/>
            <person name="Holt R.A."/>
            <person name="Evans C.A."/>
            <person name="Gocayne J.D."/>
            <person name="Amanatides P.G."/>
            <person name="Scherer S.E."/>
            <person name="Li P.W."/>
            <person name="Hoskins R.A."/>
            <person name="Galle R.F."/>
            <person name="George R.A."/>
            <person name="Lewis S.E."/>
            <person name="Richards S."/>
            <person name="Ashburner M."/>
            <person name="Henderson S.N."/>
            <person name="Sutton G.G."/>
            <person name="Wortman J.R."/>
            <person name="Yandell M.D."/>
            <person name="Zhang Q."/>
            <person name="Chen L.X."/>
            <person name="Brandon R.C."/>
            <person name="Rogers Y.-H.C."/>
            <person name="Blazej R.G."/>
            <person name="Champe M."/>
            <person name="Pfeiffer B.D."/>
            <person name="Wan K.H."/>
            <person name="Doyle C."/>
            <person name="Baxter E.G."/>
            <person name="Helt G."/>
            <person name="Nelson C.R."/>
            <person name="Miklos G.L.G."/>
            <person name="Abril J.F."/>
            <person name="Agbayani A."/>
            <person name="An H.-J."/>
            <person name="Andrews-Pfannkoch C."/>
            <person name="Baldwin D."/>
            <person name="Ballew R.M."/>
            <person name="Basu A."/>
            <person name="Baxendale J."/>
            <person name="Bayraktaroglu L."/>
            <person name="Beasley E.M."/>
            <person name="Beeson K.Y."/>
            <person name="Benos P.V."/>
            <person name="Berman B.P."/>
            <person name="Bhandari D."/>
            <person name="Bolshakov S."/>
            <person name="Borkova D."/>
            <person name="Botchan M.R."/>
            <person name="Bouck J."/>
            <person name="Brokstein P."/>
            <person name="Brottier P."/>
            <person name="Burtis K.C."/>
            <person name="Busam D.A."/>
            <person name="Butler H."/>
            <person name="Cadieu E."/>
            <person name="Center A."/>
            <person name="Chandra I."/>
            <person name="Cherry J.M."/>
            <person name="Cawley S."/>
            <person name="Dahlke C."/>
            <person name="Davenport L.B."/>
            <person name="Davies P."/>
            <person name="de Pablos B."/>
            <person name="Delcher A."/>
            <person name="Deng Z."/>
            <person name="Mays A.D."/>
            <person name="Dew I."/>
            <person name="Dietz S.M."/>
            <person name="Dodson K."/>
            <person name="Doup L.E."/>
            <person name="Downes M."/>
            <person name="Dugan-Rocha S."/>
            <person name="Dunkov B.C."/>
            <person name="Dunn P."/>
            <person name="Durbin K.J."/>
            <person name="Evangelista C.C."/>
            <person name="Ferraz C."/>
            <person name="Ferriera S."/>
            <person name="Fleischmann W."/>
            <person name="Fosler C."/>
            <person name="Gabrielian A.E."/>
            <person name="Garg N.S."/>
            <person name="Gelbart W.M."/>
            <person name="Glasser K."/>
            <person name="Glodek A."/>
            <person name="Gong F."/>
            <person name="Gorrell J.H."/>
            <person name="Gu Z."/>
            <person name="Guan P."/>
            <person name="Harris M."/>
            <person name="Harris N.L."/>
            <person name="Harvey D.A."/>
            <person name="Heiman T.J."/>
            <person name="Hernandez J.R."/>
            <person name="Houck J."/>
            <person name="Hostin D."/>
            <person name="Houston K.A."/>
            <person name="Howland T.J."/>
            <person name="Wei M.-H."/>
            <person name="Ibegwam C."/>
            <person name="Jalali M."/>
            <person name="Kalush F."/>
            <person name="Karpen G.H."/>
            <person name="Ke Z."/>
            <person name="Kennison J.A."/>
            <person name="Ketchum K.A."/>
            <person name="Kimmel B.E."/>
            <person name="Kodira C.D."/>
            <person name="Kraft C.L."/>
            <person name="Kravitz S."/>
            <person name="Kulp D."/>
            <person name="Lai Z."/>
            <person name="Lasko P."/>
            <person name="Lei Y."/>
            <person name="Levitsky A.A."/>
            <person name="Li J.H."/>
            <person name="Li Z."/>
            <person name="Liang Y."/>
            <person name="Lin X."/>
            <person name="Liu X."/>
            <person name="Mattei B."/>
            <person name="McIntosh T.C."/>
            <person name="McLeod M.P."/>
            <person name="McPherson D."/>
            <person name="Merkulov G."/>
            <person name="Milshina N.V."/>
            <person name="Mobarry C."/>
            <person name="Morris J."/>
            <person name="Moshrefi A."/>
            <person name="Mount S.M."/>
            <person name="Moy M."/>
            <person name="Murphy B."/>
            <person name="Murphy L."/>
            <person name="Muzny D.M."/>
            <person name="Nelson D.L."/>
            <person name="Nelson D.R."/>
            <person name="Nelson K.A."/>
            <person name="Nixon K."/>
            <person name="Nusskern D.R."/>
            <person name="Pacleb J.M."/>
            <person name="Palazzolo M."/>
            <person name="Pittman G.S."/>
            <person name="Pan S."/>
            <person name="Pollard J."/>
            <person name="Puri V."/>
            <person name="Reese M.G."/>
            <person name="Reinert K."/>
            <person name="Remington K."/>
            <person name="Saunders R.D.C."/>
            <person name="Scheeler F."/>
            <person name="Shen H."/>
            <person name="Shue B.C."/>
            <person name="Siden-Kiamos I."/>
            <person name="Simpson M."/>
            <person name="Skupski M.P."/>
            <person name="Smith T.J."/>
            <person name="Spier E."/>
            <person name="Spradling A.C."/>
            <person name="Stapleton M."/>
            <person name="Strong R."/>
            <person name="Sun E."/>
            <person name="Svirskas R."/>
            <person name="Tector C."/>
            <person name="Turner R."/>
            <person name="Venter E."/>
            <person name="Wang A.H."/>
            <person name="Wang X."/>
            <person name="Wang Z.-Y."/>
            <person name="Wassarman D.A."/>
            <person name="Weinstock G.M."/>
            <person name="Weissenbach J."/>
            <person name="Williams S.M."/>
            <person name="Woodage T."/>
            <person name="Worley K.C."/>
            <person name="Wu D."/>
            <person name="Yang S."/>
            <person name="Yao Q.A."/>
            <person name="Ye J."/>
            <person name="Yeh R.-F."/>
            <person name="Zaveri J.S."/>
            <person name="Zhan M."/>
            <person name="Zhang G."/>
            <person name="Zhao Q."/>
            <person name="Zheng L."/>
            <person name="Zheng X.H."/>
            <person name="Zhong F.N."/>
            <person name="Zhong W."/>
            <person name="Zhou X."/>
            <person name="Zhu S.C."/>
            <person name="Zhu X."/>
            <person name="Smith H.O."/>
            <person name="Gibbs R.A."/>
            <person name="Myers E.W."/>
            <person name="Rubin G.M."/>
            <person name="Venter J.C."/>
        </authorList>
    </citation>
    <scope>NUCLEOTIDE SEQUENCE [LARGE SCALE GENOMIC DNA]</scope>
    <source>
        <strain>Berkeley</strain>
    </source>
</reference>
<reference key="2">
    <citation type="journal article" date="2002" name="Genome Biol.">
        <title>Annotation of the Drosophila melanogaster euchromatic genome: a systematic review.</title>
        <authorList>
            <person name="Misra S."/>
            <person name="Crosby M.A."/>
            <person name="Mungall C.J."/>
            <person name="Matthews B.B."/>
            <person name="Campbell K.S."/>
            <person name="Hradecky P."/>
            <person name="Huang Y."/>
            <person name="Kaminker J.S."/>
            <person name="Millburn G.H."/>
            <person name="Prochnik S.E."/>
            <person name="Smith C.D."/>
            <person name="Tupy J.L."/>
            <person name="Whitfield E.J."/>
            <person name="Bayraktaroglu L."/>
            <person name="Berman B.P."/>
            <person name="Bettencourt B.R."/>
            <person name="Celniker S.E."/>
            <person name="de Grey A.D.N.J."/>
            <person name="Drysdale R.A."/>
            <person name="Harris N.L."/>
            <person name="Richter J."/>
            <person name="Russo S."/>
            <person name="Schroeder A.J."/>
            <person name="Shu S.Q."/>
            <person name="Stapleton M."/>
            <person name="Yamada C."/>
            <person name="Ashburner M."/>
            <person name="Gelbart W.M."/>
            <person name="Rubin G.M."/>
            <person name="Lewis S.E."/>
        </authorList>
    </citation>
    <scope>GENOME REANNOTATION</scope>
    <source>
        <strain>Berkeley</strain>
    </source>
</reference>
<reference key="3">
    <citation type="journal article" date="2002" name="Genome Biol.">
        <title>A Drosophila full-length cDNA resource.</title>
        <authorList>
            <person name="Stapleton M."/>
            <person name="Carlson J.W."/>
            <person name="Brokstein P."/>
            <person name="Yu C."/>
            <person name="Champe M."/>
            <person name="George R.A."/>
            <person name="Guarin H."/>
            <person name="Kronmiller B."/>
            <person name="Pacleb J.M."/>
            <person name="Park S."/>
            <person name="Wan K.H."/>
            <person name="Rubin G.M."/>
            <person name="Celniker S.E."/>
        </authorList>
    </citation>
    <scope>NUCLEOTIDE SEQUENCE [LARGE SCALE MRNA]</scope>
    <source>
        <strain>Berkeley</strain>
        <tissue>Ovary</tissue>
        <tissue>Testis</tissue>
    </source>
</reference>
<reference key="4">
    <citation type="journal article" date="2005" name="Genes Cells">
        <title>Identification of DRG family regulatory proteins (DFRPs): specific regulation of DRG1 and DRG2.</title>
        <authorList>
            <person name="Ishikawa K."/>
            <person name="Azuma S."/>
            <person name="Ikawa S."/>
            <person name="Semba K."/>
            <person name="Inoue J."/>
        </authorList>
    </citation>
    <scope>IDENTIFICATION</scope>
</reference>
<reference key="5">
    <citation type="journal article" date="2008" name="J. Proteome Res.">
        <title>Phosphoproteome analysis of Drosophila melanogaster embryos.</title>
        <authorList>
            <person name="Zhai B."/>
            <person name="Villen J."/>
            <person name="Beausoleil S.A."/>
            <person name="Mintseris J."/>
            <person name="Gygi S.P."/>
        </authorList>
    </citation>
    <scope>PHOSPHORYLATION [LARGE SCALE ANALYSIS] AT THR-218 AND SER-221</scope>
    <scope>IDENTIFICATION BY MASS SPECTROMETRY</scope>
    <source>
        <tissue>Embryo</tissue>
    </source>
</reference>
<proteinExistence type="evidence at protein level"/>
<feature type="chain" id="PRO_0000324652" description="Zinc finger CCCH domain-containing protein 15 homolog">
    <location>
        <begin position="1"/>
        <end position="404"/>
    </location>
</feature>
<feature type="zinc finger region" description="C3H1-type 1" evidence="2">
    <location>
        <begin position="94"/>
        <end position="121"/>
    </location>
</feature>
<feature type="zinc finger region" description="C3H1-type 2" evidence="2">
    <location>
        <begin position="165"/>
        <end position="202"/>
    </location>
</feature>
<feature type="region of interest" description="Disordered" evidence="3">
    <location>
        <begin position="1"/>
        <end position="71"/>
    </location>
</feature>
<feature type="region of interest" description="Disordered" evidence="3">
    <location>
        <begin position="352"/>
        <end position="380"/>
    </location>
</feature>
<feature type="coiled-coil region" evidence="1">
    <location>
        <begin position="246"/>
        <end position="270"/>
    </location>
</feature>
<feature type="compositionally biased region" description="Pro residues" evidence="3">
    <location>
        <begin position="1"/>
        <end position="10"/>
    </location>
</feature>
<feature type="compositionally biased region" description="Basic and acidic residues" evidence="3">
    <location>
        <begin position="12"/>
        <end position="28"/>
    </location>
</feature>
<feature type="compositionally biased region" description="Low complexity" evidence="3">
    <location>
        <begin position="38"/>
        <end position="50"/>
    </location>
</feature>
<feature type="compositionally biased region" description="Basic and acidic residues" evidence="3">
    <location>
        <begin position="56"/>
        <end position="71"/>
    </location>
</feature>
<feature type="compositionally biased region" description="Low complexity" evidence="3">
    <location>
        <begin position="352"/>
        <end position="361"/>
    </location>
</feature>
<feature type="compositionally biased region" description="Low complexity" evidence="3">
    <location>
        <begin position="369"/>
        <end position="380"/>
    </location>
</feature>
<feature type="modified residue" description="Phosphothreonine" evidence="4">
    <location>
        <position position="218"/>
    </location>
</feature>
<feature type="modified residue" description="Phosphoserine" evidence="4">
    <location>
        <position position="221"/>
    </location>
</feature>
<evidence type="ECO:0000255" key="1"/>
<evidence type="ECO:0000255" key="2">
    <source>
        <dbReference type="PROSITE-ProRule" id="PRU00723"/>
    </source>
</evidence>
<evidence type="ECO:0000256" key="3">
    <source>
        <dbReference type="SAM" id="MobiDB-lite"/>
    </source>
</evidence>
<evidence type="ECO:0000269" key="4">
    <source>
    </source>
</evidence>
<evidence type="ECO:0000305" key="5"/>
<dbReference type="EMBL" id="AE013599">
    <property type="protein sequence ID" value="AAF59063.1"/>
    <property type="molecule type" value="Genomic_DNA"/>
</dbReference>
<dbReference type="EMBL" id="AY060945">
    <property type="protein sequence ID" value="AAL28493.1"/>
    <property type="molecule type" value="mRNA"/>
</dbReference>
<dbReference type="EMBL" id="AY113336">
    <property type="protein sequence ID" value="AAM29341.1"/>
    <property type="molecule type" value="mRNA"/>
</dbReference>
<dbReference type="RefSeq" id="NP_001286202.1">
    <property type="nucleotide sequence ID" value="NM_001299273.1"/>
</dbReference>
<dbReference type="RefSeq" id="NP_610401.1">
    <property type="nucleotide sequence ID" value="NM_136557.3"/>
</dbReference>
<dbReference type="BioGRID" id="61700">
    <property type="interactions" value="5"/>
</dbReference>
<dbReference type="FunCoup" id="Q7JWR9">
    <property type="interactions" value="2738"/>
</dbReference>
<dbReference type="IntAct" id="Q7JWR9">
    <property type="interactions" value="19"/>
</dbReference>
<dbReference type="STRING" id="7227.FBpp0087806"/>
<dbReference type="iPTMnet" id="Q7JWR9"/>
<dbReference type="PaxDb" id="7227-FBpp0087806"/>
<dbReference type="DNASU" id="35850"/>
<dbReference type="EnsemblMetazoa" id="FBtr0088727">
    <property type="protein sequence ID" value="FBpp0087806"/>
    <property type="gene ID" value="FBgn0033317"/>
</dbReference>
<dbReference type="EnsemblMetazoa" id="FBtr0339356">
    <property type="protein sequence ID" value="FBpp0308450"/>
    <property type="gene ID" value="FBgn0033317"/>
</dbReference>
<dbReference type="GeneID" id="35850"/>
<dbReference type="KEGG" id="dme:Dmel_CG8635"/>
<dbReference type="UCSC" id="CG8635-RA">
    <property type="organism name" value="d. melanogaster"/>
</dbReference>
<dbReference type="AGR" id="FB:FBgn0033317"/>
<dbReference type="FlyBase" id="FBgn0033317">
    <property type="gene designation" value="CG8635"/>
</dbReference>
<dbReference type="VEuPathDB" id="VectorBase:FBgn0033317"/>
<dbReference type="eggNOG" id="KOG1763">
    <property type="taxonomic scope" value="Eukaryota"/>
</dbReference>
<dbReference type="GeneTree" id="ENSGT00390000015818"/>
<dbReference type="HOGENOM" id="CLU_042870_3_0_1"/>
<dbReference type="InParanoid" id="Q7JWR9"/>
<dbReference type="OMA" id="AMIFKPV"/>
<dbReference type="OrthoDB" id="278280at2759"/>
<dbReference type="PhylomeDB" id="Q7JWR9"/>
<dbReference type="Reactome" id="R-DME-9629569">
    <property type="pathway name" value="Protein hydroxylation"/>
</dbReference>
<dbReference type="BioGRID-ORCS" id="35850">
    <property type="hits" value="0 hits in 1 CRISPR screen"/>
</dbReference>
<dbReference type="GenomeRNAi" id="35850"/>
<dbReference type="PRO" id="PR:Q7JWR9"/>
<dbReference type="Proteomes" id="UP000000803">
    <property type="component" value="Chromosome 2R"/>
</dbReference>
<dbReference type="Bgee" id="FBgn0033317">
    <property type="expression patterns" value="Expressed in adult enteroendocrine precursor cell in adult midgut (Drosophila) and 185 other cell types or tissues"/>
</dbReference>
<dbReference type="ExpressionAtlas" id="Q7JWR9">
    <property type="expression patterns" value="baseline and differential"/>
</dbReference>
<dbReference type="GO" id="GO:0005829">
    <property type="term" value="C:cytosol"/>
    <property type="evidence" value="ECO:0000318"/>
    <property type="project" value="GO_Central"/>
</dbReference>
<dbReference type="GO" id="GO:0008270">
    <property type="term" value="F:zinc ion binding"/>
    <property type="evidence" value="ECO:0007669"/>
    <property type="project" value="UniProtKB-KW"/>
</dbReference>
<dbReference type="GO" id="GO:0002181">
    <property type="term" value="P:cytoplasmic translation"/>
    <property type="evidence" value="ECO:0000318"/>
    <property type="project" value="GO_Central"/>
</dbReference>
<dbReference type="Gene3D" id="6.20.400.10">
    <property type="match status" value="1"/>
</dbReference>
<dbReference type="Gene3D" id="4.10.1000.10">
    <property type="entry name" value="Zinc finger, CCCH-type"/>
    <property type="match status" value="1"/>
</dbReference>
<dbReference type="InterPro" id="IPR032378">
    <property type="entry name" value="ZC3H15/TMA46_C"/>
</dbReference>
<dbReference type="InterPro" id="IPR000571">
    <property type="entry name" value="Znf_CCCH"/>
</dbReference>
<dbReference type="InterPro" id="IPR036855">
    <property type="entry name" value="Znf_CCCH_sf"/>
</dbReference>
<dbReference type="PANTHER" id="PTHR12681:SF0">
    <property type="entry name" value="ZINC FINGER CCCH DOMAIN-CONTAINING PROTEIN 15"/>
    <property type="match status" value="1"/>
</dbReference>
<dbReference type="PANTHER" id="PTHR12681">
    <property type="entry name" value="ZINC FINGER-CONTAINING PROTEIN P48ZNF"/>
    <property type="match status" value="1"/>
</dbReference>
<dbReference type="Pfam" id="PF16543">
    <property type="entry name" value="DFRP_C"/>
    <property type="match status" value="1"/>
</dbReference>
<dbReference type="Pfam" id="PF00642">
    <property type="entry name" value="zf-CCCH"/>
    <property type="match status" value="1"/>
</dbReference>
<dbReference type="SMART" id="SM00356">
    <property type="entry name" value="ZnF_C3H1"/>
    <property type="match status" value="2"/>
</dbReference>
<dbReference type="SUPFAM" id="SSF90229">
    <property type="entry name" value="CCCH zinc finger"/>
    <property type="match status" value="1"/>
</dbReference>
<dbReference type="PROSITE" id="PS50103">
    <property type="entry name" value="ZF_C3H1"/>
    <property type="match status" value="2"/>
</dbReference>
<gene>
    <name type="ORF">CG8635</name>
</gene>
<accession>Q7JWR9</accession>
<keyword id="KW-0175">Coiled coil</keyword>
<keyword id="KW-0479">Metal-binding</keyword>
<keyword id="KW-0597">Phosphoprotein</keyword>
<keyword id="KW-1185">Reference proteome</keyword>
<keyword id="KW-0677">Repeat</keyword>
<keyword id="KW-0862">Zinc</keyword>
<keyword id="KW-0863">Zinc-finger</keyword>